<gene>
    <name type="primary">CSRP2</name>
</gene>
<sequence length="194" mass="20925">MPNWGGGNKCGACGRTVYHAEEVQCDGRSFHRCCFLCMVCRKNLDSTTVAIHDAEVYCKSCYGKKYGPKGYGYGQGAGTLNMDRGERLGIKPESTPSPHRPTTNPNTSKFAQKFGGAEKCSRCGDSVYAAEKVIGAGKPWHKNCFRCAKCGKSLESTTLTEKEGEIYCKGCYAKNFGPKGFGYGQGAGALVHAQ</sequence>
<dbReference type="EMBL" id="X84264">
    <property type="protein sequence ID" value="CAA59025.1"/>
    <property type="molecule type" value="mRNA"/>
</dbReference>
<dbReference type="PIR" id="S52335">
    <property type="entry name" value="S52335"/>
</dbReference>
<dbReference type="RefSeq" id="NP_990539.1">
    <property type="nucleotide sequence ID" value="NM_205208.2"/>
</dbReference>
<dbReference type="SMR" id="P50460"/>
<dbReference type="FunCoup" id="P50460">
    <property type="interactions" value="808"/>
</dbReference>
<dbReference type="STRING" id="9031.ENSGALP00000045485"/>
<dbReference type="GlyGen" id="P50460">
    <property type="glycosylation" value="1 site"/>
</dbReference>
<dbReference type="PaxDb" id="9031-ENSGALP00000043387"/>
<dbReference type="Ensembl" id="ENSGALT00000155176">
    <property type="protein sequence ID" value="ENSGALP00000080967"/>
    <property type="gene ID" value="ENSGALG00000029921"/>
</dbReference>
<dbReference type="Ensembl" id="ENSGALT00010032523.1">
    <property type="protein sequence ID" value="ENSGALP00010019263.1"/>
    <property type="gene ID" value="ENSGALG00010013516.1"/>
</dbReference>
<dbReference type="GeneID" id="396128"/>
<dbReference type="KEGG" id="gga:396128"/>
<dbReference type="CTD" id="1466"/>
<dbReference type="VEuPathDB" id="HostDB:geneid_396128"/>
<dbReference type="eggNOG" id="KOG1700">
    <property type="taxonomic scope" value="Eukaryota"/>
</dbReference>
<dbReference type="GeneTree" id="ENSGT00940000154980"/>
<dbReference type="HOGENOM" id="CLU_054591_1_0_1"/>
<dbReference type="InParanoid" id="P50460"/>
<dbReference type="OMA" id="CKTDYDR"/>
<dbReference type="OrthoDB" id="8062037at2759"/>
<dbReference type="PhylomeDB" id="P50460"/>
<dbReference type="TreeFam" id="TF313758"/>
<dbReference type="PRO" id="PR:P50460"/>
<dbReference type="Proteomes" id="UP000000539">
    <property type="component" value="Chromosome 1"/>
</dbReference>
<dbReference type="GO" id="GO:0005634">
    <property type="term" value="C:nucleus"/>
    <property type="evidence" value="ECO:0007669"/>
    <property type="project" value="UniProtKB-SubCell"/>
</dbReference>
<dbReference type="GO" id="GO:0046872">
    <property type="term" value="F:metal ion binding"/>
    <property type="evidence" value="ECO:0007669"/>
    <property type="project" value="UniProtKB-KW"/>
</dbReference>
<dbReference type="GO" id="GO:0030154">
    <property type="term" value="P:cell differentiation"/>
    <property type="evidence" value="ECO:0007669"/>
    <property type="project" value="UniProtKB-KW"/>
</dbReference>
<dbReference type="CDD" id="cd09480">
    <property type="entry name" value="LIM1_CRP2"/>
    <property type="match status" value="1"/>
</dbReference>
<dbReference type="CDD" id="cd09840">
    <property type="entry name" value="LIM2_CRP2"/>
    <property type="match status" value="1"/>
</dbReference>
<dbReference type="FunFam" id="2.10.110.10:FF:000001">
    <property type="entry name" value="Cysteine and glycine-rich protein 1"/>
    <property type="match status" value="2"/>
</dbReference>
<dbReference type="Gene3D" id="2.10.110.10">
    <property type="entry name" value="Cysteine Rich Protein"/>
    <property type="match status" value="2"/>
</dbReference>
<dbReference type="InterPro" id="IPR001781">
    <property type="entry name" value="Znf_LIM"/>
</dbReference>
<dbReference type="PANTHER" id="PTHR24215:SF3">
    <property type="entry name" value="CYSTEINE AND GLYCINE-RICH PROTEIN 2"/>
    <property type="match status" value="1"/>
</dbReference>
<dbReference type="PANTHER" id="PTHR24215">
    <property type="entry name" value="RHO-GTPASE-ACTIVATING PROTEIN LRG1"/>
    <property type="match status" value="1"/>
</dbReference>
<dbReference type="Pfam" id="PF00412">
    <property type="entry name" value="LIM"/>
    <property type="match status" value="2"/>
</dbReference>
<dbReference type="SMART" id="SM00132">
    <property type="entry name" value="LIM"/>
    <property type="match status" value="2"/>
</dbReference>
<dbReference type="SUPFAM" id="SSF57716">
    <property type="entry name" value="Glucocorticoid receptor-like (DNA-binding domain)"/>
    <property type="match status" value="4"/>
</dbReference>
<dbReference type="PROSITE" id="PS00478">
    <property type="entry name" value="LIM_DOMAIN_1"/>
    <property type="match status" value="2"/>
</dbReference>
<dbReference type="PROSITE" id="PS50023">
    <property type="entry name" value="LIM_DOMAIN_2"/>
    <property type="match status" value="2"/>
</dbReference>
<organism>
    <name type="scientific">Gallus gallus</name>
    <name type="common">Chicken</name>
    <dbReference type="NCBI Taxonomy" id="9031"/>
    <lineage>
        <taxon>Eukaryota</taxon>
        <taxon>Metazoa</taxon>
        <taxon>Chordata</taxon>
        <taxon>Craniata</taxon>
        <taxon>Vertebrata</taxon>
        <taxon>Euteleostomi</taxon>
        <taxon>Archelosauria</taxon>
        <taxon>Archosauria</taxon>
        <taxon>Dinosauria</taxon>
        <taxon>Saurischia</taxon>
        <taxon>Theropoda</taxon>
        <taxon>Coelurosauria</taxon>
        <taxon>Aves</taxon>
        <taxon>Neognathae</taxon>
        <taxon>Galloanserae</taxon>
        <taxon>Galliformes</taxon>
        <taxon>Phasianidae</taxon>
        <taxon>Phasianinae</taxon>
        <taxon>Gallus</taxon>
    </lineage>
</organism>
<name>CSRP2_CHICK</name>
<reference key="1">
    <citation type="journal article" date="1995" name="J. Biol. Chem.">
        <title>The cysteine-rich protein family of highly related LIM domain proteins.</title>
        <authorList>
            <person name="Weiskirchen R."/>
            <person name="Pino J.D."/>
            <person name="Macalma T."/>
            <person name="Bister K."/>
            <person name="Beckerle M.C."/>
        </authorList>
    </citation>
    <scope>NUCLEOTIDE SEQUENCE [MRNA]</scope>
    <source>
        <tissue>Embryonic fibroblast</tissue>
    </source>
</reference>
<protein>
    <recommendedName>
        <fullName>Cysteine and glycine-rich protein 2</fullName>
    </recommendedName>
    <alternativeName>
        <fullName>Beta-cysteine-rich protein</fullName>
        <shortName>Beta-CRP</shortName>
    </alternativeName>
    <alternativeName>
        <fullName>Cysteine-rich protein 2</fullName>
        <shortName>CRP2</shortName>
    </alternativeName>
</protein>
<evidence type="ECO:0000250" key="1"/>
<evidence type="ECO:0000255" key="2"/>
<evidence type="ECO:0000255" key="3">
    <source>
        <dbReference type="PROSITE-ProRule" id="PRU00125"/>
    </source>
</evidence>
<evidence type="ECO:0000305" key="4"/>
<accession>P50460</accession>
<proteinExistence type="evidence at transcript level"/>
<feature type="initiator methionine" description="Removed" evidence="1">
    <location>
        <position position="1"/>
    </location>
</feature>
<feature type="chain" id="PRO_0000075724" description="Cysteine and glycine-rich protein 2">
    <location>
        <begin position="2"/>
        <end position="194"/>
    </location>
</feature>
<feature type="domain" description="LIM zinc-binding 1" evidence="3">
    <location>
        <begin position="10"/>
        <end position="61"/>
    </location>
</feature>
<feature type="domain" description="LIM zinc-binding 2" evidence="3">
    <location>
        <begin position="120"/>
        <end position="171"/>
    </location>
</feature>
<feature type="short sequence motif" description="Nuclear localization signal" evidence="2">
    <location>
        <begin position="64"/>
        <end position="69"/>
    </location>
</feature>
<comment type="function">
    <text>Totally down-regulated in transformed cells. May therefore take part in the control of cell growth and differentiation.</text>
</comment>
<comment type="subcellular location">
    <subcellularLocation>
        <location evidence="4">Nucleus</location>
    </subcellularLocation>
</comment>
<keyword id="KW-0217">Developmental protein</keyword>
<keyword id="KW-0221">Differentiation</keyword>
<keyword id="KW-0440">LIM domain</keyword>
<keyword id="KW-0479">Metal-binding</keyword>
<keyword id="KW-0539">Nucleus</keyword>
<keyword id="KW-1185">Reference proteome</keyword>
<keyword id="KW-0677">Repeat</keyword>
<keyword id="KW-0862">Zinc</keyword>